<keyword id="KW-0963">Cytoplasm</keyword>
<keyword id="KW-0342">GTP-binding</keyword>
<keyword id="KW-0378">Hydrolase</keyword>
<keyword id="KW-0460">Magnesium</keyword>
<keyword id="KW-0479">Metal-binding</keyword>
<keyword id="KW-0547">Nucleotide-binding</keyword>
<keyword id="KW-0630">Potassium</keyword>
<keyword id="KW-0819">tRNA processing</keyword>
<gene>
    <name evidence="1" type="primary">mnmE</name>
    <name evidence="1" type="synonym">trmE</name>
    <name type="ordered locus">Shal_4310</name>
</gene>
<feature type="chain" id="PRO_1000080014" description="tRNA modification GTPase MnmE">
    <location>
        <begin position="1"/>
        <end position="453"/>
    </location>
</feature>
<feature type="domain" description="TrmE-type G">
    <location>
        <begin position="215"/>
        <end position="376"/>
    </location>
</feature>
<feature type="binding site" evidence="1">
    <location>
        <position position="22"/>
    </location>
    <ligand>
        <name>(6S)-5-formyl-5,6,7,8-tetrahydrofolate</name>
        <dbReference type="ChEBI" id="CHEBI:57457"/>
    </ligand>
</feature>
<feature type="binding site" evidence="1">
    <location>
        <position position="79"/>
    </location>
    <ligand>
        <name>(6S)-5-formyl-5,6,7,8-tetrahydrofolate</name>
        <dbReference type="ChEBI" id="CHEBI:57457"/>
    </ligand>
</feature>
<feature type="binding site" evidence="1">
    <location>
        <position position="119"/>
    </location>
    <ligand>
        <name>(6S)-5-formyl-5,6,7,8-tetrahydrofolate</name>
        <dbReference type="ChEBI" id="CHEBI:57457"/>
    </ligand>
</feature>
<feature type="binding site" evidence="1">
    <location>
        <begin position="225"/>
        <end position="230"/>
    </location>
    <ligand>
        <name>GTP</name>
        <dbReference type="ChEBI" id="CHEBI:37565"/>
    </ligand>
</feature>
<feature type="binding site" evidence="1">
    <location>
        <position position="225"/>
    </location>
    <ligand>
        <name>K(+)</name>
        <dbReference type="ChEBI" id="CHEBI:29103"/>
    </ligand>
</feature>
<feature type="binding site" evidence="1">
    <location>
        <position position="229"/>
    </location>
    <ligand>
        <name>Mg(2+)</name>
        <dbReference type="ChEBI" id="CHEBI:18420"/>
    </ligand>
</feature>
<feature type="binding site" evidence="1">
    <location>
        <begin position="244"/>
        <end position="250"/>
    </location>
    <ligand>
        <name>GTP</name>
        <dbReference type="ChEBI" id="CHEBI:37565"/>
    </ligand>
</feature>
<feature type="binding site" evidence="1">
    <location>
        <position position="244"/>
    </location>
    <ligand>
        <name>K(+)</name>
        <dbReference type="ChEBI" id="CHEBI:29103"/>
    </ligand>
</feature>
<feature type="binding site" evidence="1">
    <location>
        <position position="246"/>
    </location>
    <ligand>
        <name>K(+)</name>
        <dbReference type="ChEBI" id="CHEBI:29103"/>
    </ligand>
</feature>
<feature type="binding site" evidence="1">
    <location>
        <position position="249"/>
    </location>
    <ligand>
        <name>K(+)</name>
        <dbReference type="ChEBI" id="CHEBI:29103"/>
    </ligand>
</feature>
<feature type="binding site" evidence="1">
    <location>
        <position position="250"/>
    </location>
    <ligand>
        <name>Mg(2+)</name>
        <dbReference type="ChEBI" id="CHEBI:18420"/>
    </ligand>
</feature>
<feature type="binding site" evidence="1">
    <location>
        <begin position="269"/>
        <end position="272"/>
    </location>
    <ligand>
        <name>GTP</name>
        <dbReference type="ChEBI" id="CHEBI:37565"/>
    </ligand>
</feature>
<feature type="binding site" evidence="1">
    <location>
        <begin position="334"/>
        <end position="337"/>
    </location>
    <ligand>
        <name>GTP</name>
        <dbReference type="ChEBI" id="CHEBI:37565"/>
    </ligand>
</feature>
<feature type="binding site" evidence="1">
    <location>
        <position position="453"/>
    </location>
    <ligand>
        <name>(6S)-5-formyl-5,6,7,8-tetrahydrofolate</name>
        <dbReference type="ChEBI" id="CHEBI:57457"/>
    </ligand>
</feature>
<name>MNME_SHEHH</name>
<evidence type="ECO:0000255" key="1">
    <source>
        <dbReference type="HAMAP-Rule" id="MF_00379"/>
    </source>
</evidence>
<sequence>MTTDTIVAQATAPGRGGVGIIRVSGDLASNVAMAVLGHIPKTRYADYCDFKEDSGEVIDQGIALFFKGPNSFTGEDVLELQGHGGQIVLDMLIKRVMEVDGLRIAKPGEFSEQAFMNDKLDLTQAEAIADLIDATSEQAAKSALNSLQGEFSTQVHDLVEKVTNLRLYVEAAIDFPDEEVDFLSDGKIAASLNGIIGKLDGVQASAKQGSIIREGMKVVIAGRPNAGKSSLLNALAGKESAIVTEIAGTTRDVLREHIHLDGMPLHIIDTAGLRDTADTVEKIGIERAWDEIRTADRVLFMVDGTTTPAVDPHEIWPDFIDRLPNNLGVTVVRNKADLTGEDLAITTEAGHSVYRISAKTGLGVDDLKQHLKSLMGYQSNLEGGFIARRRHLEALDLASSHLLLGKEQLEVYQAGELLAEELRMCQMALSEITGKFTSDDLLGKIFSSFCIGK</sequence>
<protein>
    <recommendedName>
        <fullName evidence="1">tRNA modification GTPase MnmE</fullName>
        <ecNumber evidence="1">3.6.-.-</ecNumber>
    </recommendedName>
</protein>
<reference key="1">
    <citation type="submission" date="2008-01" db="EMBL/GenBank/DDBJ databases">
        <title>Complete sequence of Shewanella halifaxensis HAW-EB4.</title>
        <authorList>
            <consortium name="US DOE Joint Genome Institute"/>
            <person name="Copeland A."/>
            <person name="Lucas S."/>
            <person name="Lapidus A."/>
            <person name="Glavina del Rio T."/>
            <person name="Dalin E."/>
            <person name="Tice H."/>
            <person name="Bruce D."/>
            <person name="Goodwin L."/>
            <person name="Pitluck S."/>
            <person name="Sims D."/>
            <person name="Brettin T."/>
            <person name="Detter J.C."/>
            <person name="Han C."/>
            <person name="Kuske C.R."/>
            <person name="Schmutz J."/>
            <person name="Larimer F."/>
            <person name="Land M."/>
            <person name="Hauser L."/>
            <person name="Kyrpides N."/>
            <person name="Kim E."/>
            <person name="Zhao J.-S."/>
            <person name="Richardson P."/>
        </authorList>
    </citation>
    <scope>NUCLEOTIDE SEQUENCE [LARGE SCALE GENOMIC DNA]</scope>
    <source>
        <strain>HAW-EB4</strain>
    </source>
</reference>
<dbReference type="EC" id="3.6.-.-" evidence="1"/>
<dbReference type="EMBL" id="CP000931">
    <property type="protein sequence ID" value="ABZ78850.1"/>
    <property type="molecule type" value="Genomic_DNA"/>
</dbReference>
<dbReference type="RefSeq" id="WP_012279353.1">
    <property type="nucleotide sequence ID" value="NC_010334.1"/>
</dbReference>
<dbReference type="SMR" id="B0TQH0"/>
<dbReference type="STRING" id="458817.Shal_4310"/>
<dbReference type="KEGG" id="shl:Shal_4310"/>
<dbReference type="eggNOG" id="COG0486">
    <property type="taxonomic scope" value="Bacteria"/>
</dbReference>
<dbReference type="HOGENOM" id="CLU_019624_4_1_6"/>
<dbReference type="OrthoDB" id="9805918at2"/>
<dbReference type="Proteomes" id="UP000001317">
    <property type="component" value="Chromosome"/>
</dbReference>
<dbReference type="GO" id="GO:0005829">
    <property type="term" value="C:cytosol"/>
    <property type="evidence" value="ECO:0007669"/>
    <property type="project" value="TreeGrafter"/>
</dbReference>
<dbReference type="GO" id="GO:0005525">
    <property type="term" value="F:GTP binding"/>
    <property type="evidence" value="ECO:0007669"/>
    <property type="project" value="UniProtKB-UniRule"/>
</dbReference>
<dbReference type="GO" id="GO:0003924">
    <property type="term" value="F:GTPase activity"/>
    <property type="evidence" value="ECO:0007669"/>
    <property type="project" value="UniProtKB-UniRule"/>
</dbReference>
<dbReference type="GO" id="GO:0046872">
    <property type="term" value="F:metal ion binding"/>
    <property type="evidence" value="ECO:0007669"/>
    <property type="project" value="UniProtKB-KW"/>
</dbReference>
<dbReference type="GO" id="GO:0030488">
    <property type="term" value="P:tRNA methylation"/>
    <property type="evidence" value="ECO:0007669"/>
    <property type="project" value="TreeGrafter"/>
</dbReference>
<dbReference type="GO" id="GO:0002098">
    <property type="term" value="P:tRNA wobble uridine modification"/>
    <property type="evidence" value="ECO:0007669"/>
    <property type="project" value="TreeGrafter"/>
</dbReference>
<dbReference type="CDD" id="cd04164">
    <property type="entry name" value="trmE"/>
    <property type="match status" value="1"/>
</dbReference>
<dbReference type="CDD" id="cd14858">
    <property type="entry name" value="TrmE_N"/>
    <property type="match status" value="1"/>
</dbReference>
<dbReference type="FunFam" id="3.30.1360.120:FF:000001">
    <property type="entry name" value="tRNA modification GTPase MnmE"/>
    <property type="match status" value="1"/>
</dbReference>
<dbReference type="FunFam" id="3.40.50.300:FF:000249">
    <property type="entry name" value="tRNA modification GTPase MnmE"/>
    <property type="match status" value="1"/>
</dbReference>
<dbReference type="Gene3D" id="3.40.50.300">
    <property type="entry name" value="P-loop containing nucleotide triphosphate hydrolases"/>
    <property type="match status" value="1"/>
</dbReference>
<dbReference type="Gene3D" id="3.30.1360.120">
    <property type="entry name" value="Probable tRNA modification gtpase trme, domain 1"/>
    <property type="match status" value="1"/>
</dbReference>
<dbReference type="Gene3D" id="1.20.120.430">
    <property type="entry name" value="tRNA modification GTPase MnmE domain 2"/>
    <property type="match status" value="1"/>
</dbReference>
<dbReference type="HAMAP" id="MF_00379">
    <property type="entry name" value="GTPase_MnmE"/>
    <property type="match status" value="1"/>
</dbReference>
<dbReference type="InterPro" id="IPR031168">
    <property type="entry name" value="G_TrmE"/>
</dbReference>
<dbReference type="InterPro" id="IPR006073">
    <property type="entry name" value="GTP-bd"/>
</dbReference>
<dbReference type="InterPro" id="IPR018948">
    <property type="entry name" value="GTP-bd_TrmE_N"/>
</dbReference>
<dbReference type="InterPro" id="IPR004520">
    <property type="entry name" value="GTPase_MnmE"/>
</dbReference>
<dbReference type="InterPro" id="IPR027368">
    <property type="entry name" value="MnmE_dom2"/>
</dbReference>
<dbReference type="InterPro" id="IPR025867">
    <property type="entry name" value="MnmE_helical"/>
</dbReference>
<dbReference type="InterPro" id="IPR027417">
    <property type="entry name" value="P-loop_NTPase"/>
</dbReference>
<dbReference type="InterPro" id="IPR005225">
    <property type="entry name" value="Small_GTP-bd"/>
</dbReference>
<dbReference type="InterPro" id="IPR027266">
    <property type="entry name" value="TrmE/GcvT_dom1"/>
</dbReference>
<dbReference type="NCBIfam" id="TIGR00450">
    <property type="entry name" value="mnmE_trmE_thdF"/>
    <property type="match status" value="1"/>
</dbReference>
<dbReference type="NCBIfam" id="NF003661">
    <property type="entry name" value="PRK05291.1-3"/>
    <property type="match status" value="1"/>
</dbReference>
<dbReference type="NCBIfam" id="TIGR00231">
    <property type="entry name" value="small_GTP"/>
    <property type="match status" value="1"/>
</dbReference>
<dbReference type="PANTHER" id="PTHR42714">
    <property type="entry name" value="TRNA MODIFICATION GTPASE GTPBP3"/>
    <property type="match status" value="1"/>
</dbReference>
<dbReference type="PANTHER" id="PTHR42714:SF2">
    <property type="entry name" value="TRNA MODIFICATION GTPASE GTPBP3, MITOCHONDRIAL"/>
    <property type="match status" value="1"/>
</dbReference>
<dbReference type="Pfam" id="PF01926">
    <property type="entry name" value="MMR_HSR1"/>
    <property type="match status" value="1"/>
</dbReference>
<dbReference type="Pfam" id="PF12631">
    <property type="entry name" value="MnmE_helical"/>
    <property type="match status" value="1"/>
</dbReference>
<dbReference type="Pfam" id="PF10396">
    <property type="entry name" value="TrmE_N"/>
    <property type="match status" value="1"/>
</dbReference>
<dbReference type="SUPFAM" id="SSF52540">
    <property type="entry name" value="P-loop containing nucleoside triphosphate hydrolases"/>
    <property type="match status" value="1"/>
</dbReference>
<dbReference type="SUPFAM" id="SSF116878">
    <property type="entry name" value="TrmE connector domain"/>
    <property type="match status" value="1"/>
</dbReference>
<dbReference type="PROSITE" id="PS51709">
    <property type="entry name" value="G_TRME"/>
    <property type="match status" value="1"/>
</dbReference>
<proteinExistence type="inferred from homology"/>
<accession>B0TQH0</accession>
<organism>
    <name type="scientific">Shewanella halifaxensis (strain HAW-EB4)</name>
    <dbReference type="NCBI Taxonomy" id="458817"/>
    <lineage>
        <taxon>Bacteria</taxon>
        <taxon>Pseudomonadati</taxon>
        <taxon>Pseudomonadota</taxon>
        <taxon>Gammaproteobacteria</taxon>
        <taxon>Alteromonadales</taxon>
        <taxon>Shewanellaceae</taxon>
        <taxon>Shewanella</taxon>
    </lineage>
</organism>
<comment type="function">
    <text evidence="1">Exhibits a very high intrinsic GTPase hydrolysis rate. Involved in the addition of a carboxymethylaminomethyl (cmnm) group at the wobble position (U34) of certain tRNAs, forming tRNA-cmnm(5)s(2)U34.</text>
</comment>
<comment type="cofactor">
    <cofactor evidence="1">
        <name>K(+)</name>
        <dbReference type="ChEBI" id="CHEBI:29103"/>
    </cofactor>
    <text evidence="1">Binds 1 potassium ion per subunit.</text>
</comment>
<comment type="subunit">
    <text evidence="1">Homodimer. Heterotetramer of two MnmE and two MnmG subunits.</text>
</comment>
<comment type="subcellular location">
    <subcellularLocation>
        <location evidence="1">Cytoplasm</location>
    </subcellularLocation>
</comment>
<comment type="similarity">
    <text evidence="1">Belongs to the TRAFAC class TrmE-Era-EngA-EngB-Septin-like GTPase superfamily. TrmE GTPase family.</text>
</comment>